<accession>Q3IYY4</accession>
<reference key="1">
    <citation type="submission" date="2005-09" db="EMBL/GenBank/DDBJ databases">
        <title>Complete sequence of chromosome 1 of Rhodobacter sphaeroides 2.4.1.</title>
        <authorList>
            <person name="Copeland A."/>
            <person name="Lucas S."/>
            <person name="Lapidus A."/>
            <person name="Barry K."/>
            <person name="Detter J.C."/>
            <person name="Glavina T."/>
            <person name="Hammon N."/>
            <person name="Israni S."/>
            <person name="Pitluck S."/>
            <person name="Richardson P."/>
            <person name="Mackenzie C."/>
            <person name="Choudhary M."/>
            <person name="Larimer F."/>
            <person name="Hauser L.J."/>
            <person name="Land M."/>
            <person name="Donohue T.J."/>
            <person name="Kaplan S."/>
        </authorList>
    </citation>
    <scope>NUCLEOTIDE SEQUENCE [LARGE SCALE GENOMIC DNA]</scope>
    <source>
        <strain>ATCC 17023 / DSM 158 / JCM 6121 / CCUG 31486 / LMG 2827 / NBRC 12203 / NCIMB 8253 / ATH 2.4.1.</strain>
    </source>
</reference>
<comment type="function">
    <text evidence="1">Necessary for normal cell division and for the maintenance of normal septation.</text>
</comment>
<comment type="cofactor">
    <cofactor evidence="1">
        <name>Mg(2+)</name>
        <dbReference type="ChEBI" id="CHEBI:18420"/>
    </cofactor>
</comment>
<comment type="similarity">
    <text evidence="1">Belongs to the TRAFAC class TrmE-Era-EngA-EngB-Septin-like GTPase superfamily. EngB GTPase family.</text>
</comment>
<sequence length="217" mass="23687">MTSLPFPLSPEPDEASREAGRLLFAGPCDFVKGVTTMEALPPADRIEVCFAGRSNVGKSSLINALTGRKALARASNTPGRTQEINYFALGPSRYLVDLPGYGYAEAPKPIVQRWQRLLKGYLAGRQTLRRAFVLIDTRHGVKSVDEEILTLLDRSAVTFQVVMTKADKVSQAEREAVLDQVRGALKKHPAAYPELVMTSSEKGMGIETLRTIVATLG</sequence>
<dbReference type="EMBL" id="CP000143">
    <property type="protein sequence ID" value="ABA80250.1"/>
    <property type="molecule type" value="Genomic_DNA"/>
</dbReference>
<dbReference type="RefSeq" id="WP_011338692.1">
    <property type="nucleotide sequence ID" value="NC_007493.2"/>
</dbReference>
<dbReference type="RefSeq" id="YP_354151.1">
    <property type="nucleotide sequence ID" value="NC_007493.2"/>
</dbReference>
<dbReference type="SMR" id="Q3IYY4"/>
<dbReference type="STRING" id="272943.RSP_1066"/>
<dbReference type="EnsemblBacteria" id="ABA80250">
    <property type="protein sequence ID" value="ABA80250"/>
    <property type="gene ID" value="RSP_1066"/>
</dbReference>
<dbReference type="GeneID" id="3720881"/>
<dbReference type="KEGG" id="rsp:RSP_1066"/>
<dbReference type="PATRIC" id="fig|272943.9.peg.3040"/>
<dbReference type="eggNOG" id="COG0218">
    <property type="taxonomic scope" value="Bacteria"/>
</dbReference>
<dbReference type="OrthoDB" id="9804921at2"/>
<dbReference type="PhylomeDB" id="Q3IYY4"/>
<dbReference type="Proteomes" id="UP000002703">
    <property type="component" value="Chromosome 1"/>
</dbReference>
<dbReference type="GO" id="GO:0005829">
    <property type="term" value="C:cytosol"/>
    <property type="evidence" value="ECO:0007669"/>
    <property type="project" value="TreeGrafter"/>
</dbReference>
<dbReference type="GO" id="GO:0005525">
    <property type="term" value="F:GTP binding"/>
    <property type="evidence" value="ECO:0007669"/>
    <property type="project" value="UniProtKB-UniRule"/>
</dbReference>
<dbReference type="GO" id="GO:0046872">
    <property type="term" value="F:metal ion binding"/>
    <property type="evidence" value="ECO:0007669"/>
    <property type="project" value="UniProtKB-KW"/>
</dbReference>
<dbReference type="GO" id="GO:0000917">
    <property type="term" value="P:division septum assembly"/>
    <property type="evidence" value="ECO:0007669"/>
    <property type="project" value="UniProtKB-KW"/>
</dbReference>
<dbReference type="CDD" id="cd01876">
    <property type="entry name" value="YihA_EngB"/>
    <property type="match status" value="1"/>
</dbReference>
<dbReference type="FunFam" id="3.40.50.300:FF:000098">
    <property type="entry name" value="Probable GTP-binding protein EngB"/>
    <property type="match status" value="1"/>
</dbReference>
<dbReference type="Gene3D" id="3.40.50.300">
    <property type="entry name" value="P-loop containing nucleotide triphosphate hydrolases"/>
    <property type="match status" value="1"/>
</dbReference>
<dbReference type="HAMAP" id="MF_00321">
    <property type="entry name" value="GTPase_EngB"/>
    <property type="match status" value="1"/>
</dbReference>
<dbReference type="InterPro" id="IPR030393">
    <property type="entry name" value="G_ENGB_dom"/>
</dbReference>
<dbReference type="InterPro" id="IPR006073">
    <property type="entry name" value="GTP-bd"/>
</dbReference>
<dbReference type="InterPro" id="IPR019987">
    <property type="entry name" value="GTP-bd_ribosome_bio_YsxC"/>
</dbReference>
<dbReference type="InterPro" id="IPR027417">
    <property type="entry name" value="P-loop_NTPase"/>
</dbReference>
<dbReference type="NCBIfam" id="TIGR03598">
    <property type="entry name" value="GTPase_YsxC"/>
    <property type="match status" value="1"/>
</dbReference>
<dbReference type="PANTHER" id="PTHR11649:SF13">
    <property type="entry name" value="ENGB-TYPE G DOMAIN-CONTAINING PROTEIN"/>
    <property type="match status" value="1"/>
</dbReference>
<dbReference type="PANTHER" id="PTHR11649">
    <property type="entry name" value="MSS1/TRME-RELATED GTP-BINDING PROTEIN"/>
    <property type="match status" value="1"/>
</dbReference>
<dbReference type="Pfam" id="PF01926">
    <property type="entry name" value="MMR_HSR1"/>
    <property type="match status" value="1"/>
</dbReference>
<dbReference type="SUPFAM" id="SSF52540">
    <property type="entry name" value="P-loop containing nucleoside triphosphate hydrolases"/>
    <property type="match status" value="1"/>
</dbReference>
<dbReference type="PROSITE" id="PS51706">
    <property type="entry name" value="G_ENGB"/>
    <property type="match status" value="1"/>
</dbReference>
<name>ENGB_CERS4</name>
<protein>
    <recommendedName>
        <fullName evidence="1">Probable GTP-binding protein EngB</fullName>
    </recommendedName>
</protein>
<feature type="chain" id="PRO_0000266928" description="Probable GTP-binding protein EngB">
    <location>
        <begin position="1"/>
        <end position="217"/>
    </location>
</feature>
<feature type="domain" description="EngB-type G" evidence="1">
    <location>
        <begin position="44"/>
        <end position="217"/>
    </location>
</feature>
<feature type="binding site" evidence="1">
    <location>
        <begin position="52"/>
        <end position="59"/>
    </location>
    <ligand>
        <name>GTP</name>
        <dbReference type="ChEBI" id="CHEBI:37565"/>
    </ligand>
</feature>
<feature type="binding site" evidence="1">
    <location>
        <position position="59"/>
    </location>
    <ligand>
        <name>Mg(2+)</name>
        <dbReference type="ChEBI" id="CHEBI:18420"/>
    </ligand>
</feature>
<feature type="binding site" evidence="1">
    <location>
        <begin position="79"/>
        <end position="83"/>
    </location>
    <ligand>
        <name>GTP</name>
        <dbReference type="ChEBI" id="CHEBI:37565"/>
    </ligand>
</feature>
<feature type="binding site" evidence="1">
    <location>
        <position position="81"/>
    </location>
    <ligand>
        <name>Mg(2+)</name>
        <dbReference type="ChEBI" id="CHEBI:18420"/>
    </ligand>
</feature>
<feature type="binding site" evidence="1">
    <location>
        <begin position="97"/>
        <end position="100"/>
    </location>
    <ligand>
        <name>GTP</name>
        <dbReference type="ChEBI" id="CHEBI:37565"/>
    </ligand>
</feature>
<feature type="binding site" evidence="1">
    <location>
        <begin position="164"/>
        <end position="167"/>
    </location>
    <ligand>
        <name>GTP</name>
        <dbReference type="ChEBI" id="CHEBI:37565"/>
    </ligand>
</feature>
<feature type="binding site" evidence="1">
    <location>
        <begin position="198"/>
        <end position="200"/>
    </location>
    <ligand>
        <name>GTP</name>
        <dbReference type="ChEBI" id="CHEBI:37565"/>
    </ligand>
</feature>
<keyword id="KW-0131">Cell cycle</keyword>
<keyword id="KW-0132">Cell division</keyword>
<keyword id="KW-0342">GTP-binding</keyword>
<keyword id="KW-0460">Magnesium</keyword>
<keyword id="KW-0479">Metal-binding</keyword>
<keyword id="KW-0547">Nucleotide-binding</keyword>
<keyword id="KW-1185">Reference proteome</keyword>
<keyword id="KW-0717">Septation</keyword>
<organism>
    <name type="scientific">Cereibacter sphaeroides (strain ATCC 17023 / DSM 158 / JCM 6121 / CCUG 31486 / LMG 2827 / NBRC 12203 / NCIMB 8253 / ATH 2.4.1.)</name>
    <name type="common">Rhodobacter sphaeroides</name>
    <dbReference type="NCBI Taxonomy" id="272943"/>
    <lineage>
        <taxon>Bacteria</taxon>
        <taxon>Pseudomonadati</taxon>
        <taxon>Pseudomonadota</taxon>
        <taxon>Alphaproteobacteria</taxon>
        <taxon>Rhodobacterales</taxon>
        <taxon>Paracoccaceae</taxon>
        <taxon>Cereibacter</taxon>
    </lineage>
</organism>
<proteinExistence type="inferred from homology"/>
<evidence type="ECO:0000255" key="1">
    <source>
        <dbReference type="HAMAP-Rule" id="MF_00321"/>
    </source>
</evidence>
<gene>
    <name evidence="1" type="primary">engB</name>
    <name type="ordered locus">RHOS4_26820</name>
    <name type="ORF">RSP_1066</name>
</gene>